<sequence>MTDRYAVFGNPISHSKSPFIHGQFAAPTQESLTYEAILAPVDGFEASLTAFFNAGGKGANVTVPFKEQAFALCDSISPEAKLAGAVNTLSLLADGTIRGDNTDGLGLVADLIANLGSLQDQRVLLIGAGGAARGCILPLLNAEIAQLTISNRTHTKAQLLVDIFTSVDNGAYASKVTAVEMSELAGEFDIIINSTSASLAGELPPLPAHIITTQTVCYDMMYGASVTAFNQWALSQGAAKAIDGLGMLVGQAAKSFTLWRGVEPDTQVVLTLLRDKLMAEPK</sequence>
<gene>
    <name evidence="1" type="primary">aroE</name>
    <name type="ordered locus">Sbal195_0039</name>
</gene>
<evidence type="ECO:0000255" key="1">
    <source>
        <dbReference type="HAMAP-Rule" id="MF_00222"/>
    </source>
</evidence>
<accession>A9KUB0</accession>
<organism>
    <name type="scientific">Shewanella baltica (strain OS195)</name>
    <dbReference type="NCBI Taxonomy" id="399599"/>
    <lineage>
        <taxon>Bacteria</taxon>
        <taxon>Pseudomonadati</taxon>
        <taxon>Pseudomonadota</taxon>
        <taxon>Gammaproteobacteria</taxon>
        <taxon>Alteromonadales</taxon>
        <taxon>Shewanellaceae</taxon>
        <taxon>Shewanella</taxon>
    </lineage>
</organism>
<dbReference type="EC" id="1.1.1.25" evidence="1"/>
<dbReference type="EMBL" id="CP000891">
    <property type="protein sequence ID" value="ABX47221.1"/>
    <property type="molecule type" value="Genomic_DNA"/>
</dbReference>
<dbReference type="RefSeq" id="WP_006084802.1">
    <property type="nucleotide sequence ID" value="NC_009997.1"/>
</dbReference>
<dbReference type="SMR" id="A9KUB0"/>
<dbReference type="GeneID" id="11770406"/>
<dbReference type="KEGG" id="sbn:Sbal195_0039"/>
<dbReference type="HOGENOM" id="CLU_044063_2_1_6"/>
<dbReference type="UniPathway" id="UPA00053">
    <property type="reaction ID" value="UER00087"/>
</dbReference>
<dbReference type="Proteomes" id="UP000000770">
    <property type="component" value="Chromosome"/>
</dbReference>
<dbReference type="GO" id="GO:0005829">
    <property type="term" value="C:cytosol"/>
    <property type="evidence" value="ECO:0007669"/>
    <property type="project" value="TreeGrafter"/>
</dbReference>
<dbReference type="GO" id="GO:0050661">
    <property type="term" value="F:NADP binding"/>
    <property type="evidence" value="ECO:0007669"/>
    <property type="project" value="InterPro"/>
</dbReference>
<dbReference type="GO" id="GO:0004764">
    <property type="term" value="F:shikimate 3-dehydrogenase (NADP+) activity"/>
    <property type="evidence" value="ECO:0007669"/>
    <property type="project" value="UniProtKB-UniRule"/>
</dbReference>
<dbReference type="GO" id="GO:0008652">
    <property type="term" value="P:amino acid biosynthetic process"/>
    <property type="evidence" value="ECO:0007669"/>
    <property type="project" value="UniProtKB-KW"/>
</dbReference>
<dbReference type="GO" id="GO:0009073">
    <property type="term" value="P:aromatic amino acid family biosynthetic process"/>
    <property type="evidence" value="ECO:0007669"/>
    <property type="project" value="UniProtKB-KW"/>
</dbReference>
<dbReference type="GO" id="GO:0009423">
    <property type="term" value="P:chorismate biosynthetic process"/>
    <property type="evidence" value="ECO:0007669"/>
    <property type="project" value="UniProtKB-UniRule"/>
</dbReference>
<dbReference type="GO" id="GO:0019632">
    <property type="term" value="P:shikimate metabolic process"/>
    <property type="evidence" value="ECO:0007669"/>
    <property type="project" value="InterPro"/>
</dbReference>
<dbReference type="CDD" id="cd01065">
    <property type="entry name" value="NAD_bind_Shikimate_DH"/>
    <property type="match status" value="1"/>
</dbReference>
<dbReference type="FunFam" id="3.40.50.10860:FF:000006">
    <property type="entry name" value="Shikimate dehydrogenase (NADP(+))"/>
    <property type="match status" value="1"/>
</dbReference>
<dbReference type="FunFam" id="3.40.50.720:FF:000104">
    <property type="entry name" value="Shikimate dehydrogenase (NADP(+))"/>
    <property type="match status" value="1"/>
</dbReference>
<dbReference type="Gene3D" id="3.40.50.10860">
    <property type="entry name" value="Leucine Dehydrogenase, chain A, domain 1"/>
    <property type="match status" value="1"/>
</dbReference>
<dbReference type="Gene3D" id="3.40.50.720">
    <property type="entry name" value="NAD(P)-binding Rossmann-like Domain"/>
    <property type="match status" value="1"/>
</dbReference>
<dbReference type="HAMAP" id="MF_00222">
    <property type="entry name" value="Shikimate_DH_AroE"/>
    <property type="match status" value="1"/>
</dbReference>
<dbReference type="InterPro" id="IPR046346">
    <property type="entry name" value="Aminoacid_DH-like_N_sf"/>
</dbReference>
<dbReference type="InterPro" id="IPR036291">
    <property type="entry name" value="NAD(P)-bd_dom_sf"/>
</dbReference>
<dbReference type="InterPro" id="IPR041121">
    <property type="entry name" value="SDH_C"/>
</dbReference>
<dbReference type="InterPro" id="IPR011342">
    <property type="entry name" value="Shikimate_DH"/>
</dbReference>
<dbReference type="InterPro" id="IPR013708">
    <property type="entry name" value="Shikimate_DH-bd_N"/>
</dbReference>
<dbReference type="InterPro" id="IPR022893">
    <property type="entry name" value="Shikimate_DH_fam"/>
</dbReference>
<dbReference type="InterPro" id="IPR006151">
    <property type="entry name" value="Shikm_DH/Glu-tRNA_Rdtase"/>
</dbReference>
<dbReference type="NCBIfam" id="TIGR00507">
    <property type="entry name" value="aroE"/>
    <property type="match status" value="1"/>
</dbReference>
<dbReference type="NCBIfam" id="NF001310">
    <property type="entry name" value="PRK00258.1-2"/>
    <property type="match status" value="1"/>
</dbReference>
<dbReference type="PANTHER" id="PTHR21089:SF1">
    <property type="entry name" value="BIFUNCTIONAL 3-DEHYDROQUINATE DEHYDRATASE_SHIKIMATE DEHYDROGENASE, CHLOROPLASTIC"/>
    <property type="match status" value="1"/>
</dbReference>
<dbReference type="PANTHER" id="PTHR21089">
    <property type="entry name" value="SHIKIMATE DEHYDROGENASE"/>
    <property type="match status" value="1"/>
</dbReference>
<dbReference type="Pfam" id="PF18317">
    <property type="entry name" value="SDH_C"/>
    <property type="match status" value="1"/>
</dbReference>
<dbReference type="Pfam" id="PF01488">
    <property type="entry name" value="Shikimate_DH"/>
    <property type="match status" value="1"/>
</dbReference>
<dbReference type="Pfam" id="PF08501">
    <property type="entry name" value="Shikimate_dh_N"/>
    <property type="match status" value="1"/>
</dbReference>
<dbReference type="SUPFAM" id="SSF53223">
    <property type="entry name" value="Aminoacid dehydrogenase-like, N-terminal domain"/>
    <property type="match status" value="1"/>
</dbReference>
<dbReference type="SUPFAM" id="SSF51735">
    <property type="entry name" value="NAD(P)-binding Rossmann-fold domains"/>
    <property type="match status" value="1"/>
</dbReference>
<name>AROE_SHEB9</name>
<protein>
    <recommendedName>
        <fullName evidence="1">Shikimate dehydrogenase (NADP(+))</fullName>
        <shortName evidence="1">SDH</shortName>
        <ecNumber evidence="1">1.1.1.25</ecNumber>
    </recommendedName>
</protein>
<reference key="1">
    <citation type="submission" date="2007-11" db="EMBL/GenBank/DDBJ databases">
        <title>Complete sequence of chromosome of Shewanella baltica OS195.</title>
        <authorList>
            <consortium name="US DOE Joint Genome Institute"/>
            <person name="Copeland A."/>
            <person name="Lucas S."/>
            <person name="Lapidus A."/>
            <person name="Barry K."/>
            <person name="Glavina del Rio T."/>
            <person name="Dalin E."/>
            <person name="Tice H."/>
            <person name="Pitluck S."/>
            <person name="Chain P."/>
            <person name="Malfatti S."/>
            <person name="Shin M."/>
            <person name="Vergez L."/>
            <person name="Schmutz J."/>
            <person name="Larimer F."/>
            <person name="Land M."/>
            <person name="Hauser L."/>
            <person name="Kyrpides N."/>
            <person name="Kim E."/>
            <person name="Brettar I."/>
            <person name="Rodrigues J."/>
            <person name="Konstantinidis K."/>
            <person name="Klappenbach J."/>
            <person name="Hofle M."/>
            <person name="Tiedje J."/>
            <person name="Richardson P."/>
        </authorList>
    </citation>
    <scope>NUCLEOTIDE SEQUENCE [LARGE SCALE GENOMIC DNA]</scope>
    <source>
        <strain>OS195</strain>
    </source>
</reference>
<feature type="chain" id="PRO_1000078126" description="Shikimate dehydrogenase (NADP(+))">
    <location>
        <begin position="1"/>
        <end position="282"/>
    </location>
</feature>
<feature type="active site" description="Proton acceptor" evidence="1">
    <location>
        <position position="66"/>
    </location>
</feature>
<feature type="binding site" evidence="1">
    <location>
        <begin position="15"/>
        <end position="17"/>
    </location>
    <ligand>
        <name>shikimate</name>
        <dbReference type="ChEBI" id="CHEBI:36208"/>
    </ligand>
</feature>
<feature type="binding site" evidence="1">
    <location>
        <position position="62"/>
    </location>
    <ligand>
        <name>shikimate</name>
        <dbReference type="ChEBI" id="CHEBI:36208"/>
    </ligand>
</feature>
<feature type="binding site" evidence="1">
    <location>
        <position position="87"/>
    </location>
    <ligand>
        <name>shikimate</name>
        <dbReference type="ChEBI" id="CHEBI:36208"/>
    </ligand>
</feature>
<feature type="binding site" evidence="1">
    <location>
        <position position="103"/>
    </location>
    <ligand>
        <name>shikimate</name>
        <dbReference type="ChEBI" id="CHEBI:36208"/>
    </ligand>
</feature>
<feature type="binding site" evidence="1">
    <location>
        <begin position="127"/>
        <end position="131"/>
    </location>
    <ligand>
        <name>NADP(+)</name>
        <dbReference type="ChEBI" id="CHEBI:58349"/>
    </ligand>
</feature>
<feature type="binding site" evidence="1">
    <location>
        <begin position="151"/>
        <end position="156"/>
    </location>
    <ligand>
        <name>NADP(+)</name>
        <dbReference type="ChEBI" id="CHEBI:58349"/>
    </ligand>
</feature>
<feature type="binding site" evidence="1">
    <location>
        <position position="220"/>
    </location>
    <ligand>
        <name>NADP(+)</name>
        <dbReference type="ChEBI" id="CHEBI:58349"/>
    </ligand>
</feature>
<feature type="binding site" evidence="1">
    <location>
        <position position="222"/>
    </location>
    <ligand>
        <name>shikimate</name>
        <dbReference type="ChEBI" id="CHEBI:36208"/>
    </ligand>
</feature>
<feature type="binding site" evidence="1">
    <location>
        <position position="244"/>
    </location>
    <ligand>
        <name>NADP(+)</name>
        <dbReference type="ChEBI" id="CHEBI:58349"/>
    </ligand>
</feature>
<proteinExistence type="inferred from homology"/>
<keyword id="KW-0028">Amino-acid biosynthesis</keyword>
<keyword id="KW-0057">Aromatic amino acid biosynthesis</keyword>
<keyword id="KW-0521">NADP</keyword>
<keyword id="KW-0560">Oxidoreductase</keyword>
<comment type="function">
    <text evidence="1">Involved in the biosynthesis of the chorismate, which leads to the biosynthesis of aromatic amino acids. Catalyzes the reversible NADPH linked reduction of 3-dehydroshikimate (DHSA) to yield shikimate (SA).</text>
</comment>
<comment type="catalytic activity">
    <reaction evidence="1">
        <text>shikimate + NADP(+) = 3-dehydroshikimate + NADPH + H(+)</text>
        <dbReference type="Rhea" id="RHEA:17737"/>
        <dbReference type="ChEBI" id="CHEBI:15378"/>
        <dbReference type="ChEBI" id="CHEBI:16630"/>
        <dbReference type="ChEBI" id="CHEBI:36208"/>
        <dbReference type="ChEBI" id="CHEBI:57783"/>
        <dbReference type="ChEBI" id="CHEBI:58349"/>
        <dbReference type="EC" id="1.1.1.25"/>
    </reaction>
</comment>
<comment type="pathway">
    <text evidence="1">Metabolic intermediate biosynthesis; chorismate biosynthesis; chorismate from D-erythrose 4-phosphate and phosphoenolpyruvate: step 4/7.</text>
</comment>
<comment type="subunit">
    <text evidence="1">Homodimer.</text>
</comment>
<comment type="similarity">
    <text evidence="1">Belongs to the shikimate dehydrogenase family.</text>
</comment>